<gene>
    <name evidence="1" type="primary">rpsM</name>
    <name type="ordered locus">FMG_0179</name>
</gene>
<protein>
    <recommendedName>
        <fullName evidence="1">Small ribosomal subunit protein uS13</fullName>
    </recommendedName>
    <alternativeName>
        <fullName evidence="3">30S ribosomal protein S13</fullName>
    </alternativeName>
</protein>
<name>RS13_FINM2</name>
<sequence length="116" mass="13165">MARIQGVDLPNDKRVEIGLTAIYGIGRQSSNKILAKLGINPDTRVKDLTESELSDIRNELDNYLTEGDLRRDVAMNIKRLKEINCYRGSRHKKGLPVRGQHTKNNARTRKGPRKQA</sequence>
<dbReference type="EMBL" id="AP008971">
    <property type="protein sequence ID" value="BAG07597.1"/>
    <property type="molecule type" value="Genomic_DNA"/>
</dbReference>
<dbReference type="RefSeq" id="WP_002841105.1">
    <property type="nucleotide sequence ID" value="NC_010376.1"/>
</dbReference>
<dbReference type="SMR" id="B0RZT3"/>
<dbReference type="STRING" id="334413.FMG_0179"/>
<dbReference type="GeneID" id="60839415"/>
<dbReference type="KEGG" id="fma:FMG_0179"/>
<dbReference type="eggNOG" id="COG0099">
    <property type="taxonomic scope" value="Bacteria"/>
</dbReference>
<dbReference type="HOGENOM" id="CLU_103849_1_2_9"/>
<dbReference type="Proteomes" id="UP000001319">
    <property type="component" value="Chromosome"/>
</dbReference>
<dbReference type="GO" id="GO:0005829">
    <property type="term" value="C:cytosol"/>
    <property type="evidence" value="ECO:0007669"/>
    <property type="project" value="TreeGrafter"/>
</dbReference>
<dbReference type="GO" id="GO:0015935">
    <property type="term" value="C:small ribosomal subunit"/>
    <property type="evidence" value="ECO:0007669"/>
    <property type="project" value="TreeGrafter"/>
</dbReference>
<dbReference type="GO" id="GO:0019843">
    <property type="term" value="F:rRNA binding"/>
    <property type="evidence" value="ECO:0007669"/>
    <property type="project" value="UniProtKB-UniRule"/>
</dbReference>
<dbReference type="GO" id="GO:0003735">
    <property type="term" value="F:structural constituent of ribosome"/>
    <property type="evidence" value="ECO:0007669"/>
    <property type="project" value="InterPro"/>
</dbReference>
<dbReference type="GO" id="GO:0000049">
    <property type="term" value="F:tRNA binding"/>
    <property type="evidence" value="ECO:0007669"/>
    <property type="project" value="UniProtKB-UniRule"/>
</dbReference>
<dbReference type="GO" id="GO:0006412">
    <property type="term" value="P:translation"/>
    <property type="evidence" value="ECO:0007669"/>
    <property type="project" value="UniProtKB-UniRule"/>
</dbReference>
<dbReference type="FunFam" id="1.10.8.50:FF:000001">
    <property type="entry name" value="30S ribosomal protein S13"/>
    <property type="match status" value="1"/>
</dbReference>
<dbReference type="FunFam" id="4.10.910.10:FF:000001">
    <property type="entry name" value="30S ribosomal protein S13"/>
    <property type="match status" value="1"/>
</dbReference>
<dbReference type="Gene3D" id="1.10.8.50">
    <property type="match status" value="1"/>
</dbReference>
<dbReference type="Gene3D" id="4.10.910.10">
    <property type="entry name" value="30s ribosomal protein s13, domain 2"/>
    <property type="match status" value="1"/>
</dbReference>
<dbReference type="HAMAP" id="MF_01315">
    <property type="entry name" value="Ribosomal_uS13"/>
    <property type="match status" value="1"/>
</dbReference>
<dbReference type="InterPro" id="IPR027437">
    <property type="entry name" value="Rbsml_uS13_C"/>
</dbReference>
<dbReference type="InterPro" id="IPR001892">
    <property type="entry name" value="Ribosomal_uS13"/>
</dbReference>
<dbReference type="InterPro" id="IPR010979">
    <property type="entry name" value="Ribosomal_uS13-like_H2TH"/>
</dbReference>
<dbReference type="InterPro" id="IPR019980">
    <property type="entry name" value="Ribosomal_uS13_bac-type"/>
</dbReference>
<dbReference type="InterPro" id="IPR018269">
    <property type="entry name" value="Ribosomal_uS13_CS"/>
</dbReference>
<dbReference type="NCBIfam" id="TIGR03631">
    <property type="entry name" value="uS13_bact"/>
    <property type="match status" value="1"/>
</dbReference>
<dbReference type="PANTHER" id="PTHR10871">
    <property type="entry name" value="30S RIBOSOMAL PROTEIN S13/40S RIBOSOMAL PROTEIN S18"/>
    <property type="match status" value="1"/>
</dbReference>
<dbReference type="PANTHER" id="PTHR10871:SF1">
    <property type="entry name" value="SMALL RIBOSOMAL SUBUNIT PROTEIN US13M"/>
    <property type="match status" value="1"/>
</dbReference>
<dbReference type="Pfam" id="PF00416">
    <property type="entry name" value="Ribosomal_S13"/>
    <property type="match status" value="1"/>
</dbReference>
<dbReference type="PIRSF" id="PIRSF002134">
    <property type="entry name" value="Ribosomal_S13"/>
    <property type="match status" value="1"/>
</dbReference>
<dbReference type="SUPFAM" id="SSF46946">
    <property type="entry name" value="S13-like H2TH domain"/>
    <property type="match status" value="1"/>
</dbReference>
<dbReference type="PROSITE" id="PS00646">
    <property type="entry name" value="RIBOSOMAL_S13_1"/>
    <property type="match status" value="1"/>
</dbReference>
<dbReference type="PROSITE" id="PS50159">
    <property type="entry name" value="RIBOSOMAL_S13_2"/>
    <property type="match status" value="1"/>
</dbReference>
<keyword id="KW-1185">Reference proteome</keyword>
<keyword id="KW-0687">Ribonucleoprotein</keyword>
<keyword id="KW-0689">Ribosomal protein</keyword>
<keyword id="KW-0694">RNA-binding</keyword>
<keyword id="KW-0699">rRNA-binding</keyword>
<keyword id="KW-0820">tRNA-binding</keyword>
<proteinExistence type="inferred from homology"/>
<evidence type="ECO:0000255" key="1">
    <source>
        <dbReference type="HAMAP-Rule" id="MF_01315"/>
    </source>
</evidence>
<evidence type="ECO:0000256" key="2">
    <source>
        <dbReference type="SAM" id="MobiDB-lite"/>
    </source>
</evidence>
<evidence type="ECO:0000305" key="3"/>
<accession>B0RZT3</accession>
<organism>
    <name type="scientific">Finegoldia magna (strain ATCC 29328 / DSM 20472 / WAL 2508)</name>
    <name type="common">Peptostreptococcus magnus</name>
    <dbReference type="NCBI Taxonomy" id="334413"/>
    <lineage>
        <taxon>Bacteria</taxon>
        <taxon>Bacillati</taxon>
        <taxon>Bacillota</taxon>
        <taxon>Tissierellia</taxon>
        <taxon>Tissierellales</taxon>
        <taxon>Peptoniphilaceae</taxon>
        <taxon>Finegoldia</taxon>
    </lineage>
</organism>
<feature type="chain" id="PRO_1000141263" description="Small ribosomal subunit protein uS13">
    <location>
        <begin position="1"/>
        <end position="116"/>
    </location>
</feature>
<feature type="region of interest" description="Disordered" evidence="2">
    <location>
        <begin position="88"/>
        <end position="116"/>
    </location>
</feature>
<comment type="function">
    <text evidence="1">Located at the top of the head of the 30S subunit, it contacts several helices of the 16S rRNA. In the 70S ribosome it contacts the 23S rRNA (bridge B1a) and protein L5 of the 50S subunit (bridge B1b), connecting the 2 subunits; these bridges are implicated in subunit movement. Contacts the tRNAs in the A and P-sites.</text>
</comment>
<comment type="subunit">
    <text evidence="1">Part of the 30S ribosomal subunit. Forms a loose heterodimer with protein S19. Forms two bridges to the 50S subunit in the 70S ribosome.</text>
</comment>
<comment type="similarity">
    <text evidence="1">Belongs to the universal ribosomal protein uS13 family.</text>
</comment>
<reference key="1">
    <citation type="journal article" date="2008" name="DNA Res.">
        <title>Complete genome sequence of Finegoldia magna, an anaerobic opportunistic pathogen.</title>
        <authorList>
            <person name="Goto T."/>
            <person name="Yamashita A."/>
            <person name="Hirakawa H."/>
            <person name="Matsutani M."/>
            <person name="Todo K."/>
            <person name="Ohshima K."/>
            <person name="Toh H."/>
            <person name="Miyamoto K."/>
            <person name="Kuhara S."/>
            <person name="Hattori M."/>
            <person name="Shimizu T."/>
            <person name="Akimoto S."/>
        </authorList>
    </citation>
    <scope>NUCLEOTIDE SEQUENCE [LARGE SCALE GENOMIC DNA]</scope>
    <source>
        <strain>ATCC 29328 / DSM 20472 / WAL 2508</strain>
    </source>
</reference>